<comment type="function">
    <text evidence="1">This protein binds to the 23S rRNA, and is important in its secondary structure. It is located near the subunit interface in the base of the L7/L12 stalk, and near the tRNA binding site of the peptidyltransferase center.</text>
</comment>
<comment type="subunit">
    <text evidence="1">Part of the 50S ribosomal subunit.</text>
</comment>
<comment type="similarity">
    <text evidence="1">Belongs to the universal ribosomal protein uL6 family.</text>
</comment>
<evidence type="ECO:0000255" key="1">
    <source>
        <dbReference type="HAMAP-Rule" id="MF_01365"/>
    </source>
</evidence>
<evidence type="ECO:0000305" key="2"/>
<reference key="1">
    <citation type="journal article" date="2007" name="Genome Res.">
        <title>Genome characteristics of facultatively symbiotic Frankia sp. strains reflect host range and host plant biogeography.</title>
        <authorList>
            <person name="Normand P."/>
            <person name="Lapierre P."/>
            <person name="Tisa L.S."/>
            <person name="Gogarten J.P."/>
            <person name="Alloisio N."/>
            <person name="Bagnarol E."/>
            <person name="Bassi C.A."/>
            <person name="Berry A.M."/>
            <person name="Bickhart D.M."/>
            <person name="Choisne N."/>
            <person name="Couloux A."/>
            <person name="Cournoyer B."/>
            <person name="Cruveiller S."/>
            <person name="Daubin V."/>
            <person name="Demange N."/>
            <person name="Francino M.P."/>
            <person name="Goltsman E."/>
            <person name="Huang Y."/>
            <person name="Kopp O.R."/>
            <person name="Labarre L."/>
            <person name="Lapidus A."/>
            <person name="Lavire C."/>
            <person name="Marechal J."/>
            <person name="Martinez M."/>
            <person name="Mastronunzio J.E."/>
            <person name="Mullin B.C."/>
            <person name="Niemann J."/>
            <person name="Pujic P."/>
            <person name="Rawnsley T."/>
            <person name="Rouy Z."/>
            <person name="Schenowitz C."/>
            <person name="Sellstedt A."/>
            <person name="Tavares F."/>
            <person name="Tomkins J.P."/>
            <person name="Vallenet D."/>
            <person name="Valverde C."/>
            <person name="Wall L.G."/>
            <person name="Wang Y."/>
            <person name="Medigue C."/>
            <person name="Benson D.R."/>
        </authorList>
    </citation>
    <scope>NUCLEOTIDE SEQUENCE [LARGE SCALE GENOMIC DNA]</scope>
    <source>
        <strain>DSM 45818 / CECT 9043 / HFP020203 / CcI3</strain>
    </source>
</reference>
<organism>
    <name type="scientific">Frankia casuarinae (strain DSM 45818 / CECT 9043 / HFP020203 / CcI3)</name>
    <dbReference type="NCBI Taxonomy" id="106370"/>
    <lineage>
        <taxon>Bacteria</taxon>
        <taxon>Bacillati</taxon>
        <taxon>Actinomycetota</taxon>
        <taxon>Actinomycetes</taxon>
        <taxon>Frankiales</taxon>
        <taxon>Frankiaceae</taxon>
        <taxon>Frankia</taxon>
    </lineage>
</organism>
<gene>
    <name evidence="1" type="primary">rplF</name>
    <name type="ordered locus">Francci3_0597</name>
</gene>
<protein>
    <recommendedName>
        <fullName evidence="1">Large ribosomal subunit protein uL6</fullName>
    </recommendedName>
    <alternativeName>
        <fullName evidence="2">50S ribosomal protein L6</fullName>
    </alternativeName>
</protein>
<dbReference type="EMBL" id="CP000249">
    <property type="protein sequence ID" value="ABD09981.1"/>
    <property type="molecule type" value="Genomic_DNA"/>
</dbReference>
<dbReference type="RefSeq" id="WP_011435052.1">
    <property type="nucleotide sequence ID" value="NZ_JENI01000019.1"/>
</dbReference>
<dbReference type="SMR" id="Q2JFG1"/>
<dbReference type="STRING" id="106370.Francci3_0597"/>
<dbReference type="KEGG" id="fra:Francci3_0597"/>
<dbReference type="eggNOG" id="COG0097">
    <property type="taxonomic scope" value="Bacteria"/>
</dbReference>
<dbReference type="HOGENOM" id="CLU_065464_1_2_11"/>
<dbReference type="OrthoDB" id="9805007at2"/>
<dbReference type="PhylomeDB" id="Q2JFG1"/>
<dbReference type="Proteomes" id="UP000001937">
    <property type="component" value="Chromosome"/>
</dbReference>
<dbReference type="GO" id="GO:0022625">
    <property type="term" value="C:cytosolic large ribosomal subunit"/>
    <property type="evidence" value="ECO:0007669"/>
    <property type="project" value="TreeGrafter"/>
</dbReference>
<dbReference type="GO" id="GO:0019843">
    <property type="term" value="F:rRNA binding"/>
    <property type="evidence" value="ECO:0007669"/>
    <property type="project" value="UniProtKB-UniRule"/>
</dbReference>
<dbReference type="GO" id="GO:0003735">
    <property type="term" value="F:structural constituent of ribosome"/>
    <property type="evidence" value="ECO:0007669"/>
    <property type="project" value="InterPro"/>
</dbReference>
<dbReference type="GO" id="GO:0002181">
    <property type="term" value="P:cytoplasmic translation"/>
    <property type="evidence" value="ECO:0007669"/>
    <property type="project" value="TreeGrafter"/>
</dbReference>
<dbReference type="FunFam" id="3.90.930.12:FF:000001">
    <property type="entry name" value="50S ribosomal protein L6"/>
    <property type="match status" value="1"/>
</dbReference>
<dbReference type="FunFam" id="3.90.930.12:FF:000002">
    <property type="entry name" value="50S ribosomal protein L6"/>
    <property type="match status" value="1"/>
</dbReference>
<dbReference type="Gene3D" id="3.90.930.12">
    <property type="entry name" value="Ribosomal protein L6, alpha-beta domain"/>
    <property type="match status" value="2"/>
</dbReference>
<dbReference type="HAMAP" id="MF_01365_B">
    <property type="entry name" value="Ribosomal_uL6_B"/>
    <property type="match status" value="1"/>
</dbReference>
<dbReference type="InterPro" id="IPR000702">
    <property type="entry name" value="Ribosomal_uL6-like"/>
</dbReference>
<dbReference type="InterPro" id="IPR036789">
    <property type="entry name" value="Ribosomal_uL6-like_a/b-dom_sf"/>
</dbReference>
<dbReference type="InterPro" id="IPR020040">
    <property type="entry name" value="Ribosomal_uL6_a/b-dom"/>
</dbReference>
<dbReference type="InterPro" id="IPR019906">
    <property type="entry name" value="Ribosomal_uL6_bac-type"/>
</dbReference>
<dbReference type="InterPro" id="IPR002358">
    <property type="entry name" value="Ribosomal_uL6_CS"/>
</dbReference>
<dbReference type="NCBIfam" id="TIGR03654">
    <property type="entry name" value="L6_bact"/>
    <property type="match status" value="1"/>
</dbReference>
<dbReference type="PANTHER" id="PTHR11655">
    <property type="entry name" value="60S/50S RIBOSOMAL PROTEIN L6/L9"/>
    <property type="match status" value="1"/>
</dbReference>
<dbReference type="PANTHER" id="PTHR11655:SF14">
    <property type="entry name" value="LARGE RIBOSOMAL SUBUNIT PROTEIN UL6M"/>
    <property type="match status" value="1"/>
</dbReference>
<dbReference type="Pfam" id="PF00347">
    <property type="entry name" value="Ribosomal_L6"/>
    <property type="match status" value="2"/>
</dbReference>
<dbReference type="PIRSF" id="PIRSF002162">
    <property type="entry name" value="Ribosomal_L6"/>
    <property type="match status" value="1"/>
</dbReference>
<dbReference type="PRINTS" id="PR00059">
    <property type="entry name" value="RIBOSOMALL6"/>
</dbReference>
<dbReference type="SUPFAM" id="SSF56053">
    <property type="entry name" value="Ribosomal protein L6"/>
    <property type="match status" value="2"/>
</dbReference>
<dbReference type="PROSITE" id="PS00525">
    <property type="entry name" value="RIBOSOMAL_L6_1"/>
    <property type="match status" value="1"/>
</dbReference>
<proteinExistence type="inferred from homology"/>
<sequence>MSRIGRLPIPVPSGVDITVEGATITVKGPKGTLSHVVAEPIVVNTEDGRLLVTRPDDERRSRSLHGLTRTLVSNMVTGVTAGYSKTLEIVGVGYRVQAKGSDLEFALGYSHPVPVKAPEGIRFEVQTPTRFVVHGIDKQLVGEVSAKIRGLRKPDPYKGKGVRYQGEVVRRKVGKTGK</sequence>
<keyword id="KW-1185">Reference proteome</keyword>
<keyword id="KW-0687">Ribonucleoprotein</keyword>
<keyword id="KW-0689">Ribosomal protein</keyword>
<keyword id="KW-0694">RNA-binding</keyword>
<keyword id="KW-0699">rRNA-binding</keyword>
<accession>Q2JFG1</accession>
<feature type="chain" id="PRO_0000260870" description="Large ribosomal subunit protein uL6">
    <location>
        <begin position="1"/>
        <end position="178"/>
    </location>
</feature>
<name>RL6_FRACC</name>